<reference key="1">
    <citation type="journal article" date="2002" name="Proc. Natl. Acad. Sci. U.S.A.">
        <title>Genome sequence of the hyperthermophilic crenarchaeon Pyrobaculum aerophilum.</title>
        <authorList>
            <person name="Fitz-Gibbon S.T."/>
            <person name="Ladner H."/>
            <person name="Kim U.-J."/>
            <person name="Stetter K.O."/>
            <person name="Simon M.I."/>
            <person name="Miller J.H."/>
        </authorList>
    </citation>
    <scope>NUCLEOTIDE SEQUENCE [LARGE SCALE GENOMIC DNA]</scope>
    <source>
        <strain>ATCC 51768 / DSM 7523 / JCM 9630 / CIP 104966 / NBRC 100827 / IM2</strain>
    </source>
</reference>
<sequence length="309" mass="33319">MITIIGSGRVGTAAAVIMGLMKLDNKILLIDIVKGLPQGEALDMNHMSSILGLDVEYVGSNEYKDIEGSDLIIVTAGLPRKPGMTREQLLEANAKIVAEIGREIKKYAPDSIVILTTNPLDAMTYVMWKATGFPRERVIGFSGVLDAGRLAFYAAKKLGISPASILPIVLGQHGESMFPVPSKSYVHGVPLSKLLTEEQLKEVVEETVKAGARITELRGFSSNWGPGAGLAIMAEAVKRDAKRALIASVVLQGEYGVRDVPVEVPIILGRSGVVKVLEVELTEEERQKFMQSVEAVKKLVASVPPSYLQ</sequence>
<proteinExistence type="inferred from homology"/>
<evidence type="ECO:0000250" key="1">
    <source>
        <dbReference type="UniProtKB" id="O08349"/>
    </source>
</evidence>
<evidence type="ECO:0000250" key="2">
    <source>
        <dbReference type="UniProtKB" id="P61889"/>
    </source>
</evidence>
<evidence type="ECO:0000305" key="3"/>
<gene>
    <name type="primary">mdh</name>
    <name type="ordered locus">PAE2370</name>
</gene>
<dbReference type="EC" id="1.1.1.37" evidence="1"/>
<dbReference type="EMBL" id="AE009441">
    <property type="protein sequence ID" value="AAL64144.1"/>
    <property type="molecule type" value="Genomic_DNA"/>
</dbReference>
<dbReference type="RefSeq" id="WP_011008612.1">
    <property type="nucleotide sequence ID" value="NC_003364.1"/>
</dbReference>
<dbReference type="SMR" id="Q8ZVB2"/>
<dbReference type="FunCoup" id="Q8ZVB2">
    <property type="interactions" value="106"/>
</dbReference>
<dbReference type="STRING" id="178306.PAE2370"/>
<dbReference type="EnsemblBacteria" id="AAL64144">
    <property type="protein sequence ID" value="AAL64144"/>
    <property type="gene ID" value="PAE2370"/>
</dbReference>
<dbReference type="GeneID" id="1464480"/>
<dbReference type="KEGG" id="pai:PAE2370"/>
<dbReference type="PATRIC" id="fig|178306.9.peg.1766"/>
<dbReference type="eggNOG" id="arCOG00246">
    <property type="taxonomic scope" value="Archaea"/>
</dbReference>
<dbReference type="HOGENOM" id="CLU_045401_2_1_2"/>
<dbReference type="InParanoid" id="Q8ZVB2"/>
<dbReference type="Proteomes" id="UP000002439">
    <property type="component" value="Chromosome"/>
</dbReference>
<dbReference type="GO" id="GO:0005737">
    <property type="term" value="C:cytoplasm"/>
    <property type="evidence" value="ECO:0000318"/>
    <property type="project" value="GO_Central"/>
</dbReference>
<dbReference type="GO" id="GO:0030060">
    <property type="term" value="F:L-malate dehydrogenase (NAD+) activity"/>
    <property type="evidence" value="ECO:0000318"/>
    <property type="project" value="GO_Central"/>
</dbReference>
<dbReference type="GO" id="GO:0019752">
    <property type="term" value="P:carboxylic acid metabolic process"/>
    <property type="evidence" value="ECO:0007669"/>
    <property type="project" value="InterPro"/>
</dbReference>
<dbReference type="GO" id="GO:0006099">
    <property type="term" value="P:tricarboxylic acid cycle"/>
    <property type="evidence" value="ECO:0007669"/>
    <property type="project" value="UniProtKB-KW"/>
</dbReference>
<dbReference type="CDD" id="cd01339">
    <property type="entry name" value="LDH-like_MDH"/>
    <property type="match status" value="1"/>
</dbReference>
<dbReference type="FunFam" id="3.40.50.720:FF:000018">
    <property type="entry name" value="Malate dehydrogenase"/>
    <property type="match status" value="1"/>
</dbReference>
<dbReference type="Gene3D" id="3.90.110.10">
    <property type="entry name" value="Lactate dehydrogenase/glycoside hydrolase, family 4, C-terminal"/>
    <property type="match status" value="1"/>
</dbReference>
<dbReference type="Gene3D" id="3.40.50.720">
    <property type="entry name" value="NAD(P)-binding Rossmann-like Domain"/>
    <property type="match status" value="1"/>
</dbReference>
<dbReference type="InterPro" id="IPR001557">
    <property type="entry name" value="L-lactate/malate_DH"/>
</dbReference>
<dbReference type="InterPro" id="IPR022383">
    <property type="entry name" value="Lactate/malate_DH_C"/>
</dbReference>
<dbReference type="InterPro" id="IPR001236">
    <property type="entry name" value="Lactate/malate_DH_N"/>
</dbReference>
<dbReference type="InterPro" id="IPR015955">
    <property type="entry name" value="Lactate_DH/Glyco_Ohase_4_C"/>
</dbReference>
<dbReference type="InterPro" id="IPR011275">
    <property type="entry name" value="Malate_DH_type3"/>
</dbReference>
<dbReference type="InterPro" id="IPR036291">
    <property type="entry name" value="NAD(P)-bd_dom_sf"/>
</dbReference>
<dbReference type="NCBIfam" id="NF004863">
    <property type="entry name" value="PRK06223.1"/>
    <property type="match status" value="1"/>
</dbReference>
<dbReference type="PANTHER" id="PTHR43128">
    <property type="entry name" value="L-2-HYDROXYCARBOXYLATE DEHYDROGENASE (NAD(P)(+))"/>
    <property type="match status" value="1"/>
</dbReference>
<dbReference type="PANTHER" id="PTHR43128:SF16">
    <property type="entry name" value="L-LACTATE DEHYDROGENASE"/>
    <property type="match status" value="1"/>
</dbReference>
<dbReference type="Pfam" id="PF02866">
    <property type="entry name" value="Ldh_1_C"/>
    <property type="match status" value="1"/>
</dbReference>
<dbReference type="Pfam" id="PF00056">
    <property type="entry name" value="Ldh_1_N"/>
    <property type="match status" value="1"/>
</dbReference>
<dbReference type="PIRSF" id="PIRSF000102">
    <property type="entry name" value="Lac_mal_DH"/>
    <property type="match status" value="1"/>
</dbReference>
<dbReference type="PRINTS" id="PR00086">
    <property type="entry name" value="LLDHDRGNASE"/>
</dbReference>
<dbReference type="SUPFAM" id="SSF56327">
    <property type="entry name" value="LDH C-terminal domain-like"/>
    <property type="match status" value="1"/>
</dbReference>
<dbReference type="SUPFAM" id="SSF51735">
    <property type="entry name" value="NAD(P)-binding Rossmann-fold domains"/>
    <property type="match status" value="1"/>
</dbReference>
<accession>Q8ZVB2</accession>
<feature type="chain" id="PRO_0000113491" description="Malate dehydrogenase">
    <location>
        <begin position="1"/>
        <end position="309"/>
    </location>
</feature>
<feature type="active site" description="Proton acceptor" evidence="2">
    <location>
        <position position="173"/>
    </location>
</feature>
<feature type="binding site" evidence="1">
    <location>
        <begin position="6"/>
        <end position="11"/>
    </location>
    <ligand>
        <name>NAD(+)</name>
        <dbReference type="ChEBI" id="CHEBI:57540"/>
    </ligand>
</feature>
<feature type="binding site" evidence="1">
    <location>
        <position position="31"/>
    </location>
    <ligand>
        <name>NAD(+)</name>
        <dbReference type="ChEBI" id="CHEBI:57540"/>
    </ligand>
</feature>
<feature type="binding site" evidence="2">
    <location>
        <position position="80"/>
    </location>
    <ligand>
        <name>substrate</name>
    </ligand>
</feature>
<feature type="binding site" evidence="2">
    <location>
        <position position="86"/>
    </location>
    <ligand>
        <name>substrate</name>
    </ligand>
</feature>
<feature type="binding site" evidence="1">
    <location>
        <position position="93"/>
    </location>
    <ligand>
        <name>NAD(+)</name>
        <dbReference type="ChEBI" id="CHEBI:57540"/>
    </ligand>
</feature>
<feature type="binding site" evidence="1">
    <location>
        <begin position="116"/>
        <end position="118"/>
    </location>
    <ligand>
        <name>NAD(+)</name>
        <dbReference type="ChEBI" id="CHEBI:57540"/>
    </ligand>
</feature>
<feature type="binding site" evidence="2">
    <location>
        <position position="118"/>
    </location>
    <ligand>
        <name>substrate</name>
    </ligand>
</feature>
<feature type="binding site" evidence="2">
    <location>
        <position position="149"/>
    </location>
    <ligand>
        <name>substrate</name>
    </ligand>
</feature>
<keyword id="KW-0520">NAD</keyword>
<keyword id="KW-0560">Oxidoreductase</keyword>
<keyword id="KW-1185">Reference proteome</keyword>
<keyword id="KW-0816">Tricarboxylic acid cycle</keyword>
<protein>
    <recommendedName>
        <fullName evidence="1">Malate dehydrogenase</fullName>
        <ecNumber evidence="1">1.1.1.37</ecNumber>
    </recommendedName>
</protein>
<comment type="function">
    <text evidence="1">Catalyzes the reversible oxidation of malate to oxaloacetate.</text>
</comment>
<comment type="catalytic activity">
    <reaction evidence="1">
        <text>(S)-malate + NAD(+) = oxaloacetate + NADH + H(+)</text>
        <dbReference type="Rhea" id="RHEA:21432"/>
        <dbReference type="ChEBI" id="CHEBI:15378"/>
        <dbReference type="ChEBI" id="CHEBI:15589"/>
        <dbReference type="ChEBI" id="CHEBI:16452"/>
        <dbReference type="ChEBI" id="CHEBI:57540"/>
        <dbReference type="ChEBI" id="CHEBI:57945"/>
        <dbReference type="EC" id="1.1.1.37"/>
    </reaction>
</comment>
<comment type="similarity">
    <text evidence="3">Belongs to the LDH/MDH superfamily.</text>
</comment>
<name>MDH_PYRAE</name>
<organism>
    <name type="scientific">Pyrobaculum aerophilum (strain ATCC 51768 / DSM 7523 / JCM 9630 / CIP 104966 / NBRC 100827 / IM2)</name>
    <dbReference type="NCBI Taxonomy" id="178306"/>
    <lineage>
        <taxon>Archaea</taxon>
        <taxon>Thermoproteota</taxon>
        <taxon>Thermoprotei</taxon>
        <taxon>Thermoproteales</taxon>
        <taxon>Thermoproteaceae</taxon>
        <taxon>Pyrobaculum</taxon>
    </lineage>
</organism>